<feature type="signal peptide">
    <location>
        <begin position="1"/>
        <end position="22"/>
    </location>
</feature>
<feature type="propeptide" id="PRO_0000004883" description="Removed by a dipeptidylpeptidase">
    <location>
        <begin position="23"/>
        <end position="24"/>
    </location>
</feature>
<feature type="chain" id="PRO_0000004884" description="Sarcotoxin-2A">
    <location>
        <begin position="25"/>
        <end position="293"/>
    </location>
</feature>
<feature type="modified residue" description="Pyrrolidone carboxylic acid" evidence="2">
    <location>
        <position position="25"/>
    </location>
</feature>
<feature type="modified residue" description="Arginine amide" evidence="1">
    <location>
        <position position="293"/>
    </location>
</feature>
<sequence length="294" mass="30820">MKSFVFFAACMAIIALSSLVQAYPQKLPVPIPPPTNPPVAAFHNSVATNSKGGQDVSVKLAATNLGNKHVQPIAEVFAEGNTKGGNVLRGATVGVQGHGLGASVTKSQDGIAESFRKQAEANLRLGDSASLIGKVSQTDTKIKGIDFKPQLSSSSLALQGDRLGASISRDVNRGVSDTLTKSVSANLFRNDNHNLDASVFRSDVRQNNGFNFQKTGGMLDYSHANGHGLNAGLTRFSGIGNQATVGGYSTLFRSNDGLTSLKANAGGSQWLSGPFANQRDYSFGLGLSHNAWRG</sequence>
<protein>
    <recommendedName>
        <fullName>Sarcotoxin-2A</fullName>
    </recommendedName>
    <alternativeName>
        <fullName>Sarcotoxin IIA</fullName>
    </alternativeName>
</protein>
<keyword id="KW-0027">Amidation</keyword>
<keyword id="KW-0044">Antibiotic</keyword>
<keyword id="KW-0929">Antimicrobial</keyword>
<keyword id="KW-0903">Direct protein sequencing</keyword>
<keyword id="KW-0391">Immunity</keyword>
<keyword id="KW-0399">Innate immunity</keyword>
<keyword id="KW-0873">Pyrrolidone carboxylic acid</keyword>
<keyword id="KW-0677">Repeat</keyword>
<keyword id="KW-0964">Secreted</keyword>
<keyword id="KW-0732">Signal</keyword>
<proteinExistence type="evidence at protein level"/>
<evidence type="ECO:0000255" key="1"/>
<evidence type="ECO:0000269" key="2">
    <source>
    </source>
</evidence>
<evidence type="ECO:0000305" key="3"/>
<organism>
    <name type="scientific">Sarcophaga peregrina</name>
    <name type="common">Flesh fly</name>
    <name type="synonym">Boettcherisca peregrina</name>
    <dbReference type="NCBI Taxonomy" id="7386"/>
    <lineage>
        <taxon>Eukaryota</taxon>
        <taxon>Metazoa</taxon>
        <taxon>Ecdysozoa</taxon>
        <taxon>Arthropoda</taxon>
        <taxon>Hexapoda</taxon>
        <taxon>Insecta</taxon>
        <taxon>Pterygota</taxon>
        <taxon>Neoptera</taxon>
        <taxon>Endopterygota</taxon>
        <taxon>Diptera</taxon>
        <taxon>Brachycera</taxon>
        <taxon>Muscomorpha</taxon>
        <taxon>Oestroidea</taxon>
        <taxon>Sarcophagidae</taxon>
        <taxon>Sarcophaga</taxon>
        <taxon>Boettcherisca</taxon>
    </lineage>
</organism>
<accession>P14667</accession>
<name>SRX2A_SARPE</name>
<comment type="function">
    <text>Sarcotoxin II is an antibacterial protein which plays a role in the inflammatory response of this insect. The main effect of sarcotoxin II on E.coli may be the inhibition of cell wall synthesis, including septum formation.</text>
</comment>
<comment type="subcellular location">
    <subcellularLocation>
        <location>Secreted</location>
    </subcellularLocation>
</comment>
<comment type="tissue specificity">
    <text>Synthesized by the fat body and is eventually secreted into the hemolymph.</text>
</comment>
<comment type="induction">
    <text>In response to injury of the body wall of the larvae.</text>
</comment>
<comment type="miscellaneous">
    <text>Sarcotoxin II consists of at least four structurally related proteins named sarcotoxin IIa, II-1, II-2, and II-3.</text>
</comment>
<comment type="similarity">
    <text evidence="3">Belongs to the attacin/sarcotoxin-2 family.</text>
</comment>
<reference key="1">
    <citation type="journal article" date="1988" name="Biochemistry">
        <title>Molecular cloning, sequencing, and characterization of cDNA for sarcotoxin IIA, an inducible antibacterial protein of Sarcophaga peregrina (flesh fly).</title>
        <authorList>
            <person name="Ando K."/>
            <person name="Natori S."/>
        </authorList>
    </citation>
    <scope>NUCLEOTIDE SEQUENCE [MRNA]</scope>
    <scope>PARTIAL PROTEIN SEQUENCE</scope>
    <scope>PYROGLUTAMATE FORMATION AT GLN-25</scope>
    <source>
        <tissue>Hemolymph</tissue>
    </source>
</reference>
<dbReference type="EMBL" id="M18873">
    <property type="protein sequence ID" value="AAA29987.1"/>
    <property type="molecule type" value="mRNA"/>
</dbReference>
<dbReference type="PIR" id="A27692">
    <property type="entry name" value="A27692"/>
</dbReference>
<dbReference type="GO" id="GO:0005576">
    <property type="term" value="C:extracellular region"/>
    <property type="evidence" value="ECO:0007669"/>
    <property type="project" value="UniProtKB-SubCell"/>
</dbReference>
<dbReference type="GO" id="GO:0042742">
    <property type="term" value="P:defense response to bacterium"/>
    <property type="evidence" value="ECO:0007669"/>
    <property type="project" value="UniProtKB-KW"/>
</dbReference>
<dbReference type="GO" id="GO:0045087">
    <property type="term" value="P:innate immune response"/>
    <property type="evidence" value="ECO:0007669"/>
    <property type="project" value="UniProtKB-KW"/>
</dbReference>
<dbReference type="InterPro" id="IPR005521">
    <property type="entry name" value="Attacin_C"/>
</dbReference>
<dbReference type="InterPro" id="IPR005520">
    <property type="entry name" value="Attacin_N"/>
</dbReference>
<dbReference type="Pfam" id="PF03769">
    <property type="entry name" value="Attacin_C"/>
    <property type="match status" value="1"/>
</dbReference>
<dbReference type="Pfam" id="PF03768">
    <property type="entry name" value="Attacin_N"/>
    <property type="match status" value="1"/>
</dbReference>